<reference key="1">
    <citation type="journal article" date="1996" name="Mol. Biol. Cell">
        <title>Resorption-cycle-dependent polarization of mRNAs for different subunits of V-ATPase in bone-resorbing osteoclasts.</title>
        <authorList>
            <person name="Laitala T."/>
            <person name="Howell M.L."/>
            <person name="Dean G.E."/>
            <person name="Vaananen H.K."/>
        </authorList>
    </citation>
    <scope>NUCLEOTIDE SEQUENCE [GENOMIC DNA]</scope>
</reference>
<reference key="2">
    <citation type="journal article" date="2002" name="J. Biol. Chem.">
        <title>A proton pump ATPase with testis-specific E1-subunit isoform required for acrosome acidification.</title>
        <authorList>
            <person name="Sun-Wada G.H."/>
            <person name="Imai-Senga Y."/>
            <person name="Yamamoto A."/>
            <person name="Murata Y."/>
            <person name="Hirata T."/>
            <person name="Wada Y."/>
            <person name="Futai M."/>
        </authorList>
    </citation>
    <scope>NUCLEOTIDE SEQUENCE [MRNA]</scope>
    <scope>TISSUE SPECIFICITY</scope>
</reference>
<reference key="3">
    <citation type="journal article" date="2005" name="Science">
        <title>The transcriptional landscape of the mammalian genome.</title>
        <authorList>
            <person name="Carninci P."/>
            <person name="Kasukawa T."/>
            <person name="Katayama S."/>
            <person name="Gough J."/>
            <person name="Frith M.C."/>
            <person name="Maeda N."/>
            <person name="Oyama R."/>
            <person name="Ravasi T."/>
            <person name="Lenhard B."/>
            <person name="Wells C."/>
            <person name="Kodzius R."/>
            <person name="Shimokawa K."/>
            <person name="Bajic V.B."/>
            <person name="Brenner S.E."/>
            <person name="Batalov S."/>
            <person name="Forrest A.R."/>
            <person name="Zavolan M."/>
            <person name="Davis M.J."/>
            <person name="Wilming L.G."/>
            <person name="Aidinis V."/>
            <person name="Allen J.E."/>
            <person name="Ambesi-Impiombato A."/>
            <person name="Apweiler R."/>
            <person name="Aturaliya R.N."/>
            <person name="Bailey T.L."/>
            <person name="Bansal M."/>
            <person name="Baxter L."/>
            <person name="Beisel K.W."/>
            <person name="Bersano T."/>
            <person name="Bono H."/>
            <person name="Chalk A.M."/>
            <person name="Chiu K.P."/>
            <person name="Choudhary V."/>
            <person name="Christoffels A."/>
            <person name="Clutterbuck D.R."/>
            <person name="Crowe M.L."/>
            <person name="Dalla E."/>
            <person name="Dalrymple B.P."/>
            <person name="de Bono B."/>
            <person name="Della Gatta G."/>
            <person name="di Bernardo D."/>
            <person name="Down T."/>
            <person name="Engstrom P."/>
            <person name="Fagiolini M."/>
            <person name="Faulkner G."/>
            <person name="Fletcher C.F."/>
            <person name="Fukushima T."/>
            <person name="Furuno M."/>
            <person name="Futaki S."/>
            <person name="Gariboldi M."/>
            <person name="Georgii-Hemming P."/>
            <person name="Gingeras T.R."/>
            <person name="Gojobori T."/>
            <person name="Green R.E."/>
            <person name="Gustincich S."/>
            <person name="Harbers M."/>
            <person name="Hayashi Y."/>
            <person name="Hensch T.K."/>
            <person name="Hirokawa N."/>
            <person name="Hill D."/>
            <person name="Huminiecki L."/>
            <person name="Iacono M."/>
            <person name="Ikeo K."/>
            <person name="Iwama A."/>
            <person name="Ishikawa T."/>
            <person name="Jakt M."/>
            <person name="Kanapin A."/>
            <person name="Katoh M."/>
            <person name="Kawasawa Y."/>
            <person name="Kelso J."/>
            <person name="Kitamura H."/>
            <person name="Kitano H."/>
            <person name="Kollias G."/>
            <person name="Krishnan S.P."/>
            <person name="Kruger A."/>
            <person name="Kummerfeld S.K."/>
            <person name="Kurochkin I.V."/>
            <person name="Lareau L.F."/>
            <person name="Lazarevic D."/>
            <person name="Lipovich L."/>
            <person name="Liu J."/>
            <person name="Liuni S."/>
            <person name="McWilliam S."/>
            <person name="Madan Babu M."/>
            <person name="Madera M."/>
            <person name="Marchionni L."/>
            <person name="Matsuda H."/>
            <person name="Matsuzawa S."/>
            <person name="Miki H."/>
            <person name="Mignone F."/>
            <person name="Miyake S."/>
            <person name="Morris K."/>
            <person name="Mottagui-Tabar S."/>
            <person name="Mulder N."/>
            <person name="Nakano N."/>
            <person name="Nakauchi H."/>
            <person name="Ng P."/>
            <person name="Nilsson R."/>
            <person name="Nishiguchi S."/>
            <person name="Nishikawa S."/>
            <person name="Nori F."/>
            <person name="Ohara O."/>
            <person name="Okazaki Y."/>
            <person name="Orlando V."/>
            <person name="Pang K.C."/>
            <person name="Pavan W.J."/>
            <person name="Pavesi G."/>
            <person name="Pesole G."/>
            <person name="Petrovsky N."/>
            <person name="Piazza S."/>
            <person name="Reed J."/>
            <person name="Reid J.F."/>
            <person name="Ring B.Z."/>
            <person name="Ringwald M."/>
            <person name="Rost B."/>
            <person name="Ruan Y."/>
            <person name="Salzberg S.L."/>
            <person name="Sandelin A."/>
            <person name="Schneider C."/>
            <person name="Schoenbach C."/>
            <person name="Sekiguchi K."/>
            <person name="Semple C.A."/>
            <person name="Seno S."/>
            <person name="Sessa L."/>
            <person name="Sheng Y."/>
            <person name="Shibata Y."/>
            <person name="Shimada H."/>
            <person name="Shimada K."/>
            <person name="Silva D."/>
            <person name="Sinclair B."/>
            <person name="Sperling S."/>
            <person name="Stupka E."/>
            <person name="Sugiura K."/>
            <person name="Sultana R."/>
            <person name="Takenaka Y."/>
            <person name="Taki K."/>
            <person name="Tammoja K."/>
            <person name="Tan S.L."/>
            <person name="Tang S."/>
            <person name="Taylor M.S."/>
            <person name="Tegner J."/>
            <person name="Teichmann S.A."/>
            <person name="Ueda H.R."/>
            <person name="van Nimwegen E."/>
            <person name="Verardo R."/>
            <person name="Wei C.L."/>
            <person name="Yagi K."/>
            <person name="Yamanishi H."/>
            <person name="Zabarovsky E."/>
            <person name="Zhu S."/>
            <person name="Zimmer A."/>
            <person name="Hide W."/>
            <person name="Bult C."/>
            <person name="Grimmond S.M."/>
            <person name="Teasdale R.D."/>
            <person name="Liu E.T."/>
            <person name="Brusic V."/>
            <person name="Quackenbush J."/>
            <person name="Wahlestedt C."/>
            <person name="Mattick J.S."/>
            <person name="Hume D.A."/>
            <person name="Kai C."/>
            <person name="Sasaki D."/>
            <person name="Tomaru Y."/>
            <person name="Fukuda S."/>
            <person name="Kanamori-Katayama M."/>
            <person name="Suzuki M."/>
            <person name="Aoki J."/>
            <person name="Arakawa T."/>
            <person name="Iida J."/>
            <person name="Imamura K."/>
            <person name="Itoh M."/>
            <person name="Kato T."/>
            <person name="Kawaji H."/>
            <person name="Kawagashira N."/>
            <person name="Kawashima T."/>
            <person name="Kojima M."/>
            <person name="Kondo S."/>
            <person name="Konno H."/>
            <person name="Nakano K."/>
            <person name="Ninomiya N."/>
            <person name="Nishio T."/>
            <person name="Okada M."/>
            <person name="Plessy C."/>
            <person name="Shibata K."/>
            <person name="Shiraki T."/>
            <person name="Suzuki S."/>
            <person name="Tagami M."/>
            <person name="Waki K."/>
            <person name="Watahiki A."/>
            <person name="Okamura-Oho Y."/>
            <person name="Suzuki H."/>
            <person name="Kawai J."/>
            <person name="Hayashizaki Y."/>
        </authorList>
    </citation>
    <scope>NUCLEOTIDE SEQUENCE [LARGE SCALE MRNA]</scope>
    <source>
        <strain>C57BL/6J</strain>
        <strain>DBA/2J</strain>
        <strain>NOD</strain>
        <tissue>Placenta</tissue>
        <tissue>Retina</tissue>
    </source>
</reference>
<reference key="4">
    <citation type="journal article" date="2004" name="Genome Res.">
        <title>The status, quality, and expansion of the NIH full-length cDNA project: the Mammalian Gene Collection (MGC).</title>
        <authorList>
            <consortium name="The MGC Project Team"/>
        </authorList>
    </citation>
    <scope>NUCLEOTIDE SEQUENCE [LARGE SCALE MRNA]</scope>
    <source>
        <strain>Czech II</strain>
        <strain>FVB/N</strain>
        <tissue>Mammary tumor</tissue>
    </source>
</reference>
<reference key="5">
    <citation type="submission" date="2007-04" db="UniProtKB">
        <authorList>
            <person name="Lubec G."/>
            <person name="Klug S."/>
            <person name="Kang S.U."/>
        </authorList>
    </citation>
    <scope>PROTEIN SEQUENCE OF 14-26; 35-43; 54-60; 71-82; 86-101; 112-131; 140-147; 200-214 AND 215-224</scope>
    <scope>IDENTIFICATION BY MASS SPECTROMETRY</scope>
    <source>
        <strain>C57BL/6J</strain>
        <tissue>Brain</tissue>
        <tissue>Hippocampus</tissue>
    </source>
</reference>
<reference key="6">
    <citation type="journal article" date="2008" name="J. Proteome Res.">
        <title>Large-scale identification and evolution indexing of tyrosine phosphorylation sites from murine brain.</title>
        <authorList>
            <person name="Ballif B.A."/>
            <person name="Carey G.R."/>
            <person name="Sunyaev S.R."/>
            <person name="Gygi S.P."/>
        </authorList>
    </citation>
    <scope>PHOSPHORYLATION [LARGE SCALE ANALYSIS] AT TYR-56</scope>
    <scope>IDENTIFICATION BY MASS SPECTROMETRY [LARGE SCALE ANALYSIS]</scope>
    <source>
        <tissue>Brain</tissue>
    </source>
</reference>
<reference key="7">
    <citation type="journal article" date="2010" name="Cell">
        <title>A tissue-specific atlas of mouse protein phosphorylation and expression.</title>
        <authorList>
            <person name="Huttlin E.L."/>
            <person name="Jedrychowski M.P."/>
            <person name="Elias J.E."/>
            <person name="Goswami T."/>
            <person name="Rad R."/>
            <person name="Beausoleil S.A."/>
            <person name="Villen J."/>
            <person name="Haas W."/>
            <person name="Sowa M.E."/>
            <person name="Gygi S.P."/>
        </authorList>
    </citation>
    <scope>IDENTIFICATION BY MASS SPECTROMETRY [LARGE SCALE ANALYSIS]</scope>
    <source>
        <tissue>Brain</tissue>
        <tissue>Brown adipose tissue</tissue>
        <tissue>Heart</tissue>
        <tissue>Kidney</tissue>
        <tissue>Liver</tissue>
        <tissue>Lung</tissue>
        <tissue>Pancreas</tissue>
        <tissue>Spleen</tissue>
        <tissue>Testis</tissue>
    </source>
</reference>
<reference key="8">
    <citation type="journal article" date="2012" name="PLoS Genet.">
        <title>RAB-like 2 has an essential role in male fertility, sperm intra-flagellar transport, and tail assembly.</title>
        <authorList>
            <person name="Lo J.C."/>
            <person name="Jamsai D."/>
            <person name="O'Connor A.E."/>
            <person name="Borg C."/>
            <person name="Clark B.J."/>
            <person name="Whisstock J.C."/>
            <person name="Field M.C."/>
            <person name="Adams V."/>
            <person name="Ishikawa T."/>
            <person name="Aitken R.J."/>
            <person name="Whittle B."/>
            <person name="Goodnow C.C."/>
            <person name="Ormandy C.J."/>
            <person name="O'Bryan M.K."/>
        </authorList>
    </citation>
    <scope>INTERACTION WITH RABL2</scope>
    <scope>TISSUE SPECIFICITY</scope>
</reference>
<reference key="9">
    <citation type="journal article" date="2018" name="Am. J. Physiol.">
        <title>H+-ATPase B1 subunit localizes to thick ascending limb and distal convoluted tubule of rodent and human kidney.</title>
        <authorList>
            <person name="Frische S."/>
            <person name="Chambrey R."/>
            <person name="Trepiccione F."/>
            <person name="Zamani R."/>
            <person name="Marcussen N."/>
            <person name="Alexander R.T."/>
            <person name="Skjoedt K."/>
            <person name="Svenningsen P."/>
            <person name="Dimke H."/>
        </authorList>
    </citation>
    <scope>SUBCELLULAR LOCATION</scope>
    <scope>TISSUE SPECIFICITY</scope>
</reference>
<comment type="function">
    <text evidence="1">Subunit of the V1 complex of vacuolar(H+)-ATPase (V-ATPase), a multisubunit enzyme composed of a peripheral complex (V1) that hydrolyzes ATP and a membrane integral complex (V0) that translocates protons (By similarity). V-ATPase is responsible for acidifying and maintaining the pH of intracellular compartments and in some cell types, is targeted to the plasma membrane, where it is responsible for acidifying the extracellular environment (By similarity).</text>
</comment>
<comment type="subunit">
    <text evidence="1 4">V-ATPase is a heteromultimeric enzyme made up of two complexes: the ATP-hydrolytic V1 complex and the proton translocation V0 complex (By similarity). The V1 complex consists of three catalytic AB heterodimers that form a heterohexamer, three peripheral stalks each consisting of EG heterodimers, one central rotor including subunits D and F, and the regulatory subunits C and H (By similarity). The proton translocation complex V0 consists of the proton transport subunit a, a ring of proteolipid subunits c9c'', rotary subunit d, subunits e and f, and the accessory subunits ATP6AP1/Ac45 and ATP6AP2/PRR (By similarity). Interacts with RABL2/RABL2A; binds preferentially to GTP-bound RABL2 (PubMed:23055941). Interacts with ALDOC (By similarity). Interacts with RAB11B (By similarity).</text>
</comment>
<comment type="subcellular location">
    <subcellularLocation>
        <location evidence="5">Apical cell membrane</location>
        <topology evidence="6">Peripheral membrane protein</topology>
    </subcellularLocation>
    <subcellularLocation>
        <location evidence="2">Cytoplasmic vesicle</location>
        <location evidence="2">Secretory vesicle</location>
        <location evidence="2">Synaptic vesicle membrane</location>
        <topology evidence="6">Peripheral membrane protein</topology>
    </subcellularLocation>
    <subcellularLocation>
        <location evidence="2">Cytoplasmic vesicle</location>
        <location evidence="2">Clathrin-coated vesicle membrane</location>
        <topology evidence="6">Peripheral membrane protein</topology>
    </subcellularLocation>
</comment>
<comment type="tissue specificity">
    <text evidence="3 4 5">Expressed within the midpiece of sperm tail (at protein level) (PubMed:11872743, PubMed:23055941). Kidney; localizes to early distal nephron, encompassing thick ascending limbs and distal convoluted tubules (at protein level) (PubMed:29993276).</text>
</comment>
<comment type="similarity">
    <text evidence="6">Belongs to the V-ATPase E subunit family.</text>
</comment>
<gene>
    <name type="primary">Atp6v1e1</name>
    <name type="synonym">Atp6e</name>
    <name type="synonym">Atp6e2</name>
</gene>
<organism>
    <name type="scientific">Mus musculus</name>
    <name type="common">Mouse</name>
    <dbReference type="NCBI Taxonomy" id="10090"/>
    <lineage>
        <taxon>Eukaryota</taxon>
        <taxon>Metazoa</taxon>
        <taxon>Chordata</taxon>
        <taxon>Craniata</taxon>
        <taxon>Vertebrata</taxon>
        <taxon>Euteleostomi</taxon>
        <taxon>Mammalia</taxon>
        <taxon>Eutheria</taxon>
        <taxon>Euarchontoglires</taxon>
        <taxon>Glires</taxon>
        <taxon>Rodentia</taxon>
        <taxon>Myomorpha</taxon>
        <taxon>Muroidea</taxon>
        <taxon>Muridae</taxon>
        <taxon>Murinae</taxon>
        <taxon>Mus</taxon>
        <taxon>Mus</taxon>
    </lineage>
</organism>
<name>VATE1_MOUSE</name>
<accession>P50518</accession>
<accession>Q3UK59</accession>
<accession>Q8K5D6</accession>
<accession>Q99LD0</accession>
<proteinExistence type="evidence at protein level"/>
<dbReference type="EMBL" id="U13841">
    <property type="protein sequence ID" value="AAC52412.1"/>
    <property type="molecule type" value="Genomic_DNA"/>
</dbReference>
<dbReference type="EMBL" id="AB074758">
    <property type="protein sequence ID" value="BAB92084.1"/>
    <property type="molecule type" value="mRNA"/>
</dbReference>
<dbReference type="EMBL" id="AK146162">
    <property type="protein sequence ID" value="BAE26943.1"/>
    <property type="molecule type" value="mRNA"/>
</dbReference>
<dbReference type="EMBL" id="AK149356">
    <property type="protein sequence ID" value="BAE28832.1"/>
    <property type="molecule type" value="mRNA"/>
</dbReference>
<dbReference type="EMBL" id="AK167644">
    <property type="protein sequence ID" value="BAE39695.1"/>
    <property type="molecule type" value="mRNA"/>
</dbReference>
<dbReference type="EMBL" id="AK169854">
    <property type="protein sequence ID" value="BAE41412.1"/>
    <property type="molecule type" value="mRNA"/>
</dbReference>
<dbReference type="EMBL" id="BC003421">
    <property type="protein sequence ID" value="AAH03421.1"/>
    <property type="molecule type" value="mRNA"/>
</dbReference>
<dbReference type="EMBL" id="BC055438">
    <property type="protein sequence ID" value="AAH55438.1"/>
    <property type="molecule type" value="mRNA"/>
</dbReference>
<dbReference type="CCDS" id="CCDS20484.1"/>
<dbReference type="RefSeq" id="NP_031536.2">
    <property type="nucleotide sequence ID" value="NM_007510.2"/>
</dbReference>
<dbReference type="PDB" id="9BRA">
    <property type="method" value="EM"/>
    <property type="resolution" value="4.30 A"/>
    <property type="chains" value="8/9/Q=1-226"/>
</dbReference>
<dbReference type="PDB" id="9BRQ">
    <property type="method" value="EM"/>
    <property type="resolution" value="4.30 A"/>
    <property type="chains" value="8/9/Q=1-226"/>
</dbReference>
<dbReference type="PDB" id="9BRR">
    <property type="method" value="EM"/>
    <property type="resolution" value="4.50 A"/>
    <property type="chains" value="8/9/Q=1-226"/>
</dbReference>
<dbReference type="PDB" id="9BRS">
    <property type="method" value="EM"/>
    <property type="resolution" value="4.40 A"/>
    <property type="chains" value="8/9/Q=1-226"/>
</dbReference>
<dbReference type="PDB" id="9BRT">
    <property type="method" value="EM"/>
    <property type="resolution" value="4.30 A"/>
    <property type="chains" value="8/9/Q=1-226"/>
</dbReference>
<dbReference type="PDB" id="9BRU">
    <property type="method" value="EM"/>
    <property type="resolution" value="4.40 A"/>
    <property type="chains" value="8/9/Q=1-226"/>
</dbReference>
<dbReference type="PDBsum" id="9BRA"/>
<dbReference type="PDBsum" id="9BRQ"/>
<dbReference type="PDBsum" id="9BRR"/>
<dbReference type="PDBsum" id="9BRS"/>
<dbReference type="PDBsum" id="9BRT"/>
<dbReference type="PDBsum" id="9BRU"/>
<dbReference type="EMDB" id="EMD-44839"/>
<dbReference type="EMDB" id="EMD-44840"/>
<dbReference type="EMDB" id="EMD-44841"/>
<dbReference type="EMDB" id="EMD-44842"/>
<dbReference type="EMDB" id="EMD-44843"/>
<dbReference type="EMDB" id="EMD-44844"/>
<dbReference type="SMR" id="P50518"/>
<dbReference type="BioGRID" id="198265">
    <property type="interactions" value="17"/>
</dbReference>
<dbReference type="FunCoup" id="P50518">
    <property type="interactions" value="2737"/>
</dbReference>
<dbReference type="IntAct" id="P50518">
    <property type="interactions" value="4"/>
</dbReference>
<dbReference type="MINT" id="P50518"/>
<dbReference type="STRING" id="10090.ENSMUSP00000019354"/>
<dbReference type="TCDB" id="3.A.2.2.6">
    <property type="family name" value="the h+- or na+-translocating f-type, v-type and a-type atpase (f-atpase) superfamily"/>
</dbReference>
<dbReference type="GlyGen" id="P50518">
    <property type="glycosylation" value="1 site, 1 O-linked glycan (1 site)"/>
</dbReference>
<dbReference type="iPTMnet" id="P50518"/>
<dbReference type="PhosphoSitePlus" id="P50518"/>
<dbReference type="SwissPalm" id="P50518"/>
<dbReference type="jPOST" id="P50518"/>
<dbReference type="PaxDb" id="10090-ENSMUSP00000019354"/>
<dbReference type="PeptideAtlas" id="P50518"/>
<dbReference type="ProteomicsDB" id="297959"/>
<dbReference type="Pumba" id="P50518"/>
<dbReference type="Antibodypedia" id="4024">
    <property type="antibodies" value="191 antibodies from 25 providers"/>
</dbReference>
<dbReference type="DNASU" id="11973"/>
<dbReference type="Ensembl" id="ENSMUST00000019354.11">
    <property type="protein sequence ID" value="ENSMUSP00000019354.9"/>
    <property type="gene ID" value="ENSMUSG00000019210.11"/>
</dbReference>
<dbReference type="GeneID" id="11973"/>
<dbReference type="KEGG" id="mmu:11973"/>
<dbReference type="UCSC" id="uc009dnr.1">
    <property type="organism name" value="mouse"/>
</dbReference>
<dbReference type="AGR" id="MGI:894326"/>
<dbReference type="CTD" id="529"/>
<dbReference type="MGI" id="MGI:894326">
    <property type="gene designation" value="Atp6v1e1"/>
</dbReference>
<dbReference type="VEuPathDB" id="HostDB:ENSMUSG00000019210"/>
<dbReference type="eggNOG" id="KOG1664">
    <property type="taxonomic scope" value="Eukaryota"/>
</dbReference>
<dbReference type="GeneTree" id="ENSGT00390000002730"/>
<dbReference type="HOGENOM" id="CLU_073641_2_0_1"/>
<dbReference type="InParanoid" id="P50518"/>
<dbReference type="OMA" id="QHMMAFI"/>
<dbReference type="OrthoDB" id="86795at9989"/>
<dbReference type="PhylomeDB" id="P50518"/>
<dbReference type="TreeFam" id="TF313479"/>
<dbReference type="Reactome" id="R-MMU-1222556">
    <property type="pathway name" value="ROS and RNS production in phagocytes"/>
</dbReference>
<dbReference type="Reactome" id="R-MMU-77387">
    <property type="pathway name" value="Insulin receptor recycling"/>
</dbReference>
<dbReference type="Reactome" id="R-MMU-917977">
    <property type="pathway name" value="Transferrin endocytosis and recycling"/>
</dbReference>
<dbReference type="Reactome" id="R-MMU-9639288">
    <property type="pathway name" value="Amino acids regulate mTORC1"/>
</dbReference>
<dbReference type="Reactome" id="R-MMU-983712">
    <property type="pathway name" value="Ion channel transport"/>
</dbReference>
<dbReference type="BioGRID-ORCS" id="11973">
    <property type="hits" value="25 hits in 76 CRISPR screens"/>
</dbReference>
<dbReference type="CD-CODE" id="CE726F99">
    <property type="entry name" value="Postsynaptic density"/>
</dbReference>
<dbReference type="ChiTaRS" id="Atp6v1e1">
    <property type="organism name" value="mouse"/>
</dbReference>
<dbReference type="PRO" id="PR:P50518"/>
<dbReference type="Proteomes" id="UP000000589">
    <property type="component" value="Chromosome 6"/>
</dbReference>
<dbReference type="RNAct" id="P50518">
    <property type="molecule type" value="protein"/>
</dbReference>
<dbReference type="Bgee" id="ENSMUSG00000019210">
    <property type="expression patterns" value="Expressed in facial nucleus and 299 other cell types or tissues"/>
</dbReference>
<dbReference type="ExpressionAtlas" id="P50518">
    <property type="expression patterns" value="baseline and differential"/>
</dbReference>
<dbReference type="GO" id="GO:0016324">
    <property type="term" value="C:apical plasma membrane"/>
    <property type="evidence" value="ECO:0000314"/>
    <property type="project" value="UniProtKB"/>
</dbReference>
<dbReference type="GO" id="GO:0030665">
    <property type="term" value="C:clathrin-coated vesicle membrane"/>
    <property type="evidence" value="ECO:0007669"/>
    <property type="project" value="UniProtKB-SubCell"/>
</dbReference>
<dbReference type="GO" id="GO:0005737">
    <property type="term" value="C:cytoplasm"/>
    <property type="evidence" value="ECO:0000314"/>
    <property type="project" value="MGI"/>
</dbReference>
<dbReference type="GO" id="GO:0005829">
    <property type="term" value="C:cytosol"/>
    <property type="evidence" value="ECO:0000314"/>
    <property type="project" value="UniProtKB"/>
</dbReference>
<dbReference type="GO" id="GO:0005768">
    <property type="term" value="C:endosome"/>
    <property type="evidence" value="ECO:0000314"/>
    <property type="project" value="UniProtKB"/>
</dbReference>
<dbReference type="GO" id="GO:0005902">
    <property type="term" value="C:microvillus"/>
    <property type="evidence" value="ECO:0000314"/>
    <property type="project" value="UniProtKB"/>
</dbReference>
<dbReference type="GO" id="GO:0005739">
    <property type="term" value="C:mitochondrion"/>
    <property type="evidence" value="ECO:0007005"/>
    <property type="project" value="MGI"/>
</dbReference>
<dbReference type="GO" id="GO:0030672">
    <property type="term" value="C:synaptic vesicle membrane"/>
    <property type="evidence" value="ECO:0007669"/>
    <property type="project" value="UniProtKB-SubCell"/>
</dbReference>
<dbReference type="GO" id="GO:0000221">
    <property type="term" value="C:vacuolar proton-transporting V-type ATPase, V1 domain"/>
    <property type="evidence" value="ECO:0000250"/>
    <property type="project" value="UniProtKB"/>
</dbReference>
<dbReference type="GO" id="GO:0051117">
    <property type="term" value="F:ATPase binding"/>
    <property type="evidence" value="ECO:0007669"/>
    <property type="project" value="Ensembl"/>
</dbReference>
<dbReference type="GO" id="GO:0046961">
    <property type="term" value="F:proton-transporting ATPase activity, rotational mechanism"/>
    <property type="evidence" value="ECO:0000316"/>
    <property type="project" value="MGI"/>
</dbReference>
<dbReference type="GO" id="GO:1902600">
    <property type="term" value="P:proton transmembrane transport"/>
    <property type="evidence" value="ECO:0000316"/>
    <property type="project" value="MGI"/>
</dbReference>
<dbReference type="GO" id="GO:0097401">
    <property type="term" value="P:synaptic vesicle lumen acidification"/>
    <property type="evidence" value="ECO:0000314"/>
    <property type="project" value="SynGO"/>
</dbReference>
<dbReference type="FunFam" id="3.30.2320.30:FF:000001">
    <property type="entry name" value="V-type proton atpase subunit e 1"/>
    <property type="match status" value="1"/>
</dbReference>
<dbReference type="Gene3D" id="6.10.250.1620">
    <property type="match status" value="1"/>
</dbReference>
<dbReference type="Gene3D" id="3.30.2320.30">
    <property type="entry name" value="ATP synthase, E subunit, C-terminal"/>
    <property type="match status" value="1"/>
</dbReference>
<dbReference type="HAMAP" id="MF_00311">
    <property type="entry name" value="ATP_synth_E_arch"/>
    <property type="match status" value="1"/>
</dbReference>
<dbReference type="InterPro" id="IPR038495">
    <property type="entry name" value="ATPase_E_C"/>
</dbReference>
<dbReference type="InterPro" id="IPR002842">
    <property type="entry name" value="ATPase_V1_Esu"/>
</dbReference>
<dbReference type="PANTHER" id="PTHR45715">
    <property type="entry name" value="ATPASE H+-TRANSPORTING V1 SUBUNIT E1A-RELATED"/>
    <property type="match status" value="1"/>
</dbReference>
<dbReference type="Pfam" id="PF01991">
    <property type="entry name" value="vATP-synt_E"/>
    <property type="match status" value="1"/>
</dbReference>
<dbReference type="SUPFAM" id="SSF160527">
    <property type="entry name" value="V-type ATPase subunit E-like"/>
    <property type="match status" value="1"/>
</dbReference>
<feature type="initiator methionine" description="Removed" evidence="1">
    <location>
        <position position="1"/>
    </location>
</feature>
<feature type="chain" id="PRO_0000117296" description="V-type proton ATPase subunit E 1">
    <location>
        <begin position="2"/>
        <end position="226"/>
    </location>
</feature>
<feature type="modified residue" description="N-acetylalanine" evidence="1">
    <location>
        <position position="2"/>
    </location>
</feature>
<feature type="modified residue" description="Phosphotyrosine" evidence="7">
    <location>
        <position position="56"/>
    </location>
</feature>
<feature type="sequence conflict" description="In Ref. 1; AAC52412." evidence="6" ref="1">
    <original>ALSD</original>
    <variation>GLRH</variation>
    <location>
        <begin position="2"/>
        <end position="5"/>
    </location>
</feature>
<feature type="sequence conflict" description="In Ref. 1; AAC52412." evidence="6" ref="1">
    <original>E</original>
    <variation>EE</variation>
    <location>
        <position position="29"/>
    </location>
</feature>
<feature type="sequence conflict" description="In Ref. 1; AAC52412." evidence="6" ref="1">
    <original>VQ</original>
    <variation>LE</variation>
    <location>
        <begin position="46"/>
        <end position="47"/>
    </location>
</feature>
<feature type="sequence conflict" description="In Ref. 1; AAC52412." evidence="6" ref="1">
    <original>E</original>
    <variation>R</variation>
    <location>
        <position position="65"/>
    </location>
</feature>
<feature type="sequence conflict" description="In Ref. 1; AAC52412." evidence="6" ref="1">
    <original>Q</original>
    <variation>QQ</variation>
    <location>
        <position position="67"/>
    </location>
</feature>
<feature type="sequence conflict" description="In Ref. 2; BAB92084." evidence="6" ref="2">
    <original>A</original>
    <variation>T</variation>
    <location>
        <position position="86"/>
    </location>
</feature>
<feature type="sequence conflict" description="In Ref. 1; AAC52412." evidence="6" ref="1">
    <original>S</original>
    <variation>M</variation>
    <location>
        <position position="103"/>
    </location>
</feature>
<feature type="sequence conflict" description="In Ref. 3; BAE26943." evidence="6" ref="3">
    <original>P</original>
    <variation>T</variation>
    <location>
        <position position="153"/>
    </location>
</feature>
<feature type="sequence conflict" description="In Ref. 1; AAC52412." evidence="6" ref="1">
    <original>K</original>
    <variation>R</variation>
    <location>
        <position position="161"/>
    </location>
</feature>
<feature type="sequence conflict" description="In Ref. 1; AAC52412." evidence="6" ref="1">
    <original>AYLPEE</original>
    <variation>PTCLRN</variation>
    <location>
        <begin position="171"/>
        <end position="176"/>
    </location>
</feature>
<keyword id="KW-0002">3D-structure</keyword>
<keyword id="KW-0007">Acetylation</keyword>
<keyword id="KW-1003">Cell membrane</keyword>
<keyword id="KW-0968">Cytoplasmic vesicle</keyword>
<keyword id="KW-0903">Direct protein sequencing</keyword>
<keyword id="KW-0375">Hydrogen ion transport</keyword>
<keyword id="KW-0406">Ion transport</keyword>
<keyword id="KW-0472">Membrane</keyword>
<keyword id="KW-0597">Phosphoprotein</keyword>
<keyword id="KW-1185">Reference proteome</keyword>
<keyword id="KW-0770">Synapse</keyword>
<keyword id="KW-0813">Transport</keyword>
<evidence type="ECO:0000250" key="1">
    <source>
        <dbReference type="UniProtKB" id="P36543"/>
    </source>
</evidence>
<evidence type="ECO:0000250" key="2">
    <source>
        <dbReference type="UniProtKB" id="Q6PCU2"/>
    </source>
</evidence>
<evidence type="ECO:0000269" key="3">
    <source>
    </source>
</evidence>
<evidence type="ECO:0000269" key="4">
    <source>
    </source>
</evidence>
<evidence type="ECO:0000269" key="5">
    <source>
    </source>
</evidence>
<evidence type="ECO:0000305" key="6"/>
<evidence type="ECO:0007744" key="7">
    <source>
    </source>
</evidence>
<protein>
    <recommendedName>
        <fullName>V-type proton ATPase subunit E 1</fullName>
        <shortName>V-ATPase subunit E 1</shortName>
    </recommendedName>
    <alternativeName>
        <fullName>V-ATPase 31 kDa subunit</fullName>
        <shortName>p31</shortName>
    </alternativeName>
    <alternativeName>
        <fullName>Vacuolar proton pump subunit E 1</fullName>
    </alternativeName>
</protein>
<sequence length="226" mass="26157">MALSDADVQKQIKHMMAFIEQEANEKAEEIDAKAEEEFNIEKGRLVQTQRLKIMEYYEKKEKQIEQQKKIQMSNLMNQARLKVLRARDDLITDLLNEAKQRLSKVVKDTTRYQVLLDGLVLQGLYQLLEPRMIVRCRKQDFPLVKAAVQKAIPMYKIATKKDVDVQIDQEAYLPEEIAGGVEIYNGDRKIKVSNTLESRLDLIAQQMMPEVRGALFGANANRKFLD</sequence>